<reference key="1">
    <citation type="journal article" date="2000" name="Eur. J. Biochem.">
        <title>PAP-1, a novel target protein of phosphorylation by Pim-1 kinase.</title>
        <authorList>
            <person name="Maita H."/>
            <person name="Harada Y."/>
            <person name="Nagakubo D."/>
            <person name="Kitaura H."/>
            <person name="Ikeda M."/>
            <person name="Tamai K."/>
            <person name="Takahashi K."/>
            <person name="Ariga H."/>
            <person name="Iguchi-Ariga S.M.M."/>
        </authorList>
    </citation>
    <scope>NUCLEOTIDE SEQUENCE [MRNA]</scope>
    <scope>INTERACTION WITH PIM1</scope>
    <scope>PHOSPHORYLATION AT SER-204 AND SER-206 BY PIM1</scope>
    <source>
        <tissue>T-cell lymphoma</tissue>
    </source>
</reference>
<reference key="2">
    <citation type="submission" date="2009-01" db="UniProtKB">
        <authorList>
            <person name="Lubec G."/>
            <person name="Sunyer B."/>
            <person name="Chen W.-Q."/>
        </authorList>
    </citation>
    <scope>PROTEIN SEQUENCE OF 1-8</scope>
    <scope>IDENTIFICATION BY MASS SPECTROMETRY</scope>
    <source>
        <strain>OF1</strain>
        <tissue>Hippocampus</tissue>
    </source>
</reference>
<reference key="3">
    <citation type="journal article" date="2004" name="Gene">
        <title>A novel nucleolar protein, PAPA-1, induces growth arrest as a result of cell cycle arrest at the G1 phase.</title>
        <authorList>
            <person name="Kuroda T.S."/>
            <person name="Maita H."/>
            <person name="Tabata T."/>
            <person name="Taira T."/>
            <person name="Kitaura H."/>
            <person name="Ariga H."/>
            <person name="Iguchi-Ariga S.M.M."/>
        </authorList>
    </citation>
    <scope>INTERACTION WITH ZNHIT4</scope>
</reference>
<gene>
    <name type="primary">rp9</name>
    <name type="synonym">Rp9h</name>
</gene>
<evidence type="ECO:0000250" key="1">
    <source>
        <dbReference type="UniProtKB" id="Q8TA86"/>
    </source>
</evidence>
<evidence type="ECO:0000256" key="2">
    <source>
        <dbReference type="SAM" id="MobiDB-lite"/>
    </source>
</evidence>
<evidence type="ECO:0000305" key="3"/>
<evidence type="ECO:0000305" key="4">
    <source>
    </source>
</evidence>
<sequence length="213" mass="25262">MSSGAGSRRPREPPEHELQRRREQKRRRHDAQQLQQLKHLESFYEKPPPGFIKEDETKPEDCIPDVPGNEHAREFLAHAPTKGLWMPLGREVKVMQCWRCKRYGHRTGDKECPFFIKGNQKLEQFRVAHEDPMYDIIRENKRHEKDVRIQQLKQLLEDSTSDDDGSSSSSSGDREKRKKRKKKEKHKKRKKEKKKKKKRKHKASKSSESSDSE</sequence>
<protein>
    <recommendedName>
        <fullName>Retinitis pigmentosa 9 protein homolog</fullName>
    </recommendedName>
    <alternativeName>
        <fullName>Pim-1-associated protein</fullName>
        <shortName>PAP-1</shortName>
    </alternativeName>
</protein>
<feature type="chain" id="PRO_0000097429" description="Retinitis pigmentosa 9 protein homolog">
    <location>
        <begin position="1"/>
        <end position="213"/>
    </location>
</feature>
<feature type="zinc finger region" description="CCHC-type">
    <location>
        <begin position="96"/>
        <end position="114"/>
    </location>
</feature>
<feature type="region of interest" description="PIM1-binding">
    <location>
        <begin position="1"/>
        <end position="147"/>
    </location>
</feature>
<feature type="region of interest" description="Disordered" evidence="2">
    <location>
        <begin position="1"/>
        <end position="61"/>
    </location>
</feature>
<feature type="region of interest" description="Disordered" evidence="2">
    <location>
        <begin position="154"/>
        <end position="213"/>
    </location>
</feature>
<feature type="compositionally biased region" description="Basic and acidic residues" evidence="2">
    <location>
        <begin position="9"/>
        <end position="21"/>
    </location>
</feature>
<feature type="compositionally biased region" description="Basic and acidic residues" evidence="2">
    <location>
        <begin position="52"/>
        <end position="61"/>
    </location>
</feature>
<feature type="compositionally biased region" description="Basic residues" evidence="2">
    <location>
        <begin position="176"/>
        <end position="204"/>
    </location>
</feature>
<feature type="modified residue" description="Phosphoserine; by PIM1; in vitro" evidence="4">
    <location>
        <position position="204"/>
    </location>
</feature>
<feature type="modified residue" description="Phosphoserine; by PIM1; in vitro" evidence="4">
    <location>
        <position position="206"/>
    </location>
</feature>
<feature type="cross-link" description="Glycyl lysine isopeptide (Lys-Gly) (interchain with G-Cter in SUMO2)" evidence="1">
    <location>
        <position position="121"/>
    </location>
</feature>
<organism>
    <name type="scientific">Mus musculus</name>
    <name type="common">Mouse</name>
    <dbReference type="NCBI Taxonomy" id="10090"/>
    <lineage>
        <taxon>Eukaryota</taxon>
        <taxon>Metazoa</taxon>
        <taxon>Chordata</taxon>
        <taxon>Craniata</taxon>
        <taxon>Vertebrata</taxon>
        <taxon>Euteleostomi</taxon>
        <taxon>Mammalia</taxon>
        <taxon>Eutheria</taxon>
        <taxon>Euarchontoglires</taxon>
        <taxon>Glires</taxon>
        <taxon>Rodentia</taxon>
        <taxon>Myomorpha</taxon>
        <taxon>Muroidea</taxon>
        <taxon>Muridae</taxon>
        <taxon>Murinae</taxon>
        <taxon>Mus</taxon>
        <taxon>Mus</taxon>
    </lineage>
</organism>
<keyword id="KW-0903">Direct protein sequencing</keyword>
<keyword id="KW-1017">Isopeptide bond</keyword>
<keyword id="KW-0479">Metal-binding</keyword>
<keyword id="KW-0539">Nucleus</keyword>
<keyword id="KW-0597">Phosphoprotein</keyword>
<keyword id="KW-1185">Reference proteome</keyword>
<keyword id="KW-0832">Ubl conjugation</keyword>
<keyword id="KW-0862">Zinc</keyword>
<keyword id="KW-0863">Zinc-finger</keyword>
<accession>P97762</accession>
<name>RP9_MOUSE</name>
<proteinExistence type="evidence at protein level"/>
<dbReference type="EMBL" id="D78255">
    <property type="protein sequence ID" value="BAA11319.1"/>
    <property type="molecule type" value="mRNA"/>
</dbReference>
<dbReference type="CCDS" id="CCDS40564.1"/>
<dbReference type="RefSeq" id="NP_061209.1">
    <property type="nucleotide sequence ID" value="NM_018739.2"/>
</dbReference>
<dbReference type="BioGRID" id="207733">
    <property type="interactions" value="4"/>
</dbReference>
<dbReference type="DIP" id="DIP-33838N"/>
<dbReference type="FunCoup" id="P97762">
    <property type="interactions" value="471"/>
</dbReference>
<dbReference type="IntAct" id="P97762">
    <property type="interactions" value="2"/>
</dbReference>
<dbReference type="STRING" id="10090.ENSMUSP00000034763"/>
<dbReference type="iPTMnet" id="P97762"/>
<dbReference type="PhosphoSitePlus" id="P97762"/>
<dbReference type="PaxDb" id="10090-ENSMUSP00000034763"/>
<dbReference type="PeptideAtlas" id="P97762"/>
<dbReference type="ProteomicsDB" id="300510"/>
<dbReference type="Antibodypedia" id="26407">
    <property type="antibodies" value="49 antibodies from 17 providers"/>
</dbReference>
<dbReference type="DNASU" id="55934"/>
<dbReference type="Ensembl" id="ENSMUST00000034763.10">
    <property type="protein sequence ID" value="ENSMUSP00000034763.9"/>
    <property type="gene ID" value="ENSMUSG00000032239.11"/>
</dbReference>
<dbReference type="GeneID" id="55934"/>
<dbReference type="KEGG" id="mmu:55934"/>
<dbReference type="UCSC" id="uc009ooq.2">
    <property type="organism name" value="mouse"/>
</dbReference>
<dbReference type="AGR" id="MGI:2157166"/>
<dbReference type="CTD" id="6100"/>
<dbReference type="MGI" id="MGI:2157166">
    <property type="gene designation" value="Rp9"/>
</dbReference>
<dbReference type="VEuPathDB" id="HostDB:ENSMUSG00000032239"/>
<dbReference type="eggNOG" id="KOG3794">
    <property type="taxonomic scope" value="Eukaryota"/>
</dbReference>
<dbReference type="GeneTree" id="ENSGT00940000162896"/>
<dbReference type="HOGENOM" id="CLU_108306_0_0_1"/>
<dbReference type="InParanoid" id="P97762"/>
<dbReference type="OMA" id="YEKDMRI"/>
<dbReference type="OrthoDB" id="20809at2759"/>
<dbReference type="PhylomeDB" id="P97762"/>
<dbReference type="TreeFam" id="TF329160"/>
<dbReference type="BioGRID-ORCS" id="55934">
    <property type="hits" value="5 hits in 78 CRISPR screens"/>
</dbReference>
<dbReference type="ChiTaRS" id="Rp9">
    <property type="organism name" value="mouse"/>
</dbReference>
<dbReference type="PRO" id="PR:P97762"/>
<dbReference type="Proteomes" id="UP000000589">
    <property type="component" value="Chromosome 9"/>
</dbReference>
<dbReference type="RNAct" id="P97762">
    <property type="molecule type" value="protein"/>
</dbReference>
<dbReference type="Bgee" id="ENSMUSG00000032239">
    <property type="expression patterns" value="Expressed in embryonic brain and 260 other cell types or tissues"/>
</dbReference>
<dbReference type="ExpressionAtlas" id="P97762">
    <property type="expression patterns" value="baseline and differential"/>
</dbReference>
<dbReference type="GO" id="GO:0016607">
    <property type="term" value="C:nuclear speck"/>
    <property type="evidence" value="ECO:0000266"/>
    <property type="project" value="MGI"/>
</dbReference>
<dbReference type="GO" id="GO:0008270">
    <property type="term" value="F:zinc ion binding"/>
    <property type="evidence" value="ECO:0007669"/>
    <property type="project" value="UniProtKB-KW"/>
</dbReference>
<dbReference type="GO" id="GO:0050890">
    <property type="term" value="P:cognition"/>
    <property type="evidence" value="ECO:0007669"/>
    <property type="project" value="Ensembl"/>
</dbReference>
<dbReference type="GO" id="GO:0008380">
    <property type="term" value="P:RNA splicing"/>
    <property type="evidence" value="ECO:0007669"/>
    <property type="project" value="InterPro"/>
</dbReference>
<dbReference type="InterPro" id="IPR034585">
    <property type="entry name" value="PAP-1"/>
</dbReference>
<dbReference type="PANTHER" id="PTHR35252">
    <property type="entry name" value="RETINITIS PIGMENTOSA 9 PROTEIN"/>
    <property type="match status" value="1"/>
</dbReference>
<dbReference type="PANTHER" id="PTHR35252:SF1">
    <property type="entry name" value="RETINITIS PIGMENTOSA 9 PROTEIN"/>
    <property type="match status" value="1"/>
</dbReference>
<comment type="function">
    <text>Is thought to be a target protein for the PIM1 kinase. May play some roles in B-cell proliferation in association with PIM1.</text>
</comment>
<comment type="subunit">
    <text>Binds to PIM1. Binds to ZNHIT4.</text>
</comment>
<comment type="interaction">
    <interactant intactId="EBI-626715">
        <id>P97762</id>
    </interactant>
    <interactant intactId="EBI-309693">
        <id>Q9DA19</id>
        <label>Cir1</label>
    </interactant>
    <organismsDiffer>false</organismsDiffer>
    <experiments>6</experiments>
</comment>
<comment type="subcellular location">
    <subcellularLocation>
        <location evidence="3">Nucleus</location>
    </subcellularLocation>
</comment>
<comment type="tissue specificity">
    <text>Highly expressed in the testis, moderately in the kidney, liver and spleen, and weakly in the skeletal muscle and heart.</text>
</comment>